<comment type="function">
    <text evidence="1">Required for proper folding and/or the stability of a subset of proteins in the endoplasmic reticulum. Component of glycosylphosphatidylinositol-mannosyltransferase 1 which transfers the first of the 4 mannoses in the GPI-anchor precursors during GPI-anchor biosynthesis. Probably acts by stabilizing the mannosyltransferase gpi14 (By similarity).</text>
</comment>
<comment type="pathway">
    <text>Glycolipid biosynthesis; glycosylphosphatidylinositol-anchor biosynthesis.</text>
</comment>
<comment type="subcellular location">
    <subcellularLocation>
        <location evidence="1">Endoplasmic reticulum membrane</location>
        <topology evidence="1">Single-pass type III membrane protein</topology>
    </subcellularLocation>
</comment>
<comment type="similarity">
    <text evidence="3">Belongs to the PIGX family.</text>
</comment>
<gene>
    <name type="primary">pbn1</name>
    <name type="ORF">AO090701000218</name>
</gene>
<reference key="1">
    <citation type="journal article" date="2005" name="Nature">
        <title>Genome sequencing and analysis of Aspergillus oryzae.</title>
        <authorList>
            <person name="Machida M."/>
            <person name="Asai K."/>
            <person name="Sano M."/>
            <person name="Tanaka T."/>
            <person name="Kumagai T."/>
            <person name="Terai G."/>
            <person name="Kusumoto K."/>
            <person name="Arima T."/>
            <person name="Akita O."/>
            <person name="Kashiwagi Y."/>
            <person name="Abe K."/>
            <person name="Gomi K."/>
            <person name="Horiuchi H."/>
            <person name="Kitamoto K."/>
            <person name="Kobayashi T."/>
            <person name="Takeuchi M."/>
            <person name="Denning D.W."/>
            <person name="Galagan J.E."/>
            <person name="Nierman W.C."/>
            <person name="Yu J."/>
            <person name="Archer D.B."/>
            <person name="Bennett J.W."/>
            <person name="Bhatnagar D."/>
            <person name="Cleveland T.E."/>
            <person name="Fedorova N.D."/>
            <person name="Gotoh O."/>
            <person name="Horikawa H."/>
            <person name="Hosoyama A."/>
            <person name="Ichinomiya M."/>
            <person name="Igarashi R."/>
            <person name="Iwashita K."/>
            <person name="Juvvadi P.R."/>
            <person name="Kato M."/>
            <person name="Kato Y."/>
            <person name="Kin T."/>
            <person name="Kokubun A."/>
            <person name="Maeda H."/>
            <person name="Maeyama N."/>
            <person name="Maruyama J."/>
            <person name="Nagasaki H."/>
            <person name="Nakajima T."/>
            <person name="Oda K."/>
            <person name="Okada K."/>
            <person name="Paulsen I."/>
            <person name="Sakamoto K."/>
            <person name="Sawano T."/>
            <person name="Takahashi M."/>
            <person name="Takase K."/>
            <person name="Terabayashi Y."/>
            <person name="Wortman J.R."/>
            <person name="Yamada O."/>
            <person name="Yamagata Y."/>
            <person name="Anazawa H."/>
            <person name="Hata Y."/>
            <person name="Koide Y."/>
            <person name="Komori T."/>
            <person name="Koyama Y."/>
            <person name="Minetoki T."/>
            <person name="Suharnan S."/>
            <person name="Tanaka A."/>
            <person name="Isono K."/>
            <person name="Kuhara S."/>
            <person name="Ogasawara N."/>
            <person name="Kikuchi H."/>
        </authorList>
    </citation>
    <scope>NUCLEOTIDE SEQUENCE [LARGE SCALE GENOMIC DNA]</scope>
    <source>
        <strain>ATCC 42149 / RIB 40</strain>
    </source>
</reference>
<keyword id="KW-0256">Endoplasmic reticulum</keyword>
<keyword id="KW-0325">Glycoprotein</keyword>
<keyword id="KW-0337">GPI-anchor biosynthesis</keyword>
<keyword id="KW-0472">Membrane</keyword>
<keyword id="KW-1185">Reference proteome</keyword>
<keyword id="KW-0812">Transmembrane</keyword>
<keyword id="KW-1133">Transmembrane helix</keyword>
<protein>
    <recommendedName>
        <fullName>Protein pbn1</fullName>
    </recommendedName>
</protein>
<feature type="chain" id="PRO_0000246300" description="Protein pbn1">
    <location>
        <begin position="1"/>
        <end position="543"/>
    </location>
</feature>
<feature type="topological domain" description="Lumenal" evidence="2">
    <location>
        <begin position="1"/>
        <end position="503"/>
    </location>
</feature>
<feature type="transmembrane region" description="Helical" evidence="2">
    <location>
        <begin position="504"/>
        <end position="524"/>
    </location>
</feature>
<feature type="topological domain" description="Cytoplasmic" evidence="2">
    <location>
        <begin position="525"/>
        <end position="543"/>
    </location>
</feature>
<feature type="glycosylation site" description="N-linked (GlcNAc...) asparagine" evidence="2">
    <location>
        <position position="409"/>
    </location>
</feature>
<sequence length="543" mass="60188">MRRRITFVQRPETPFSLDQAVLTPDALALHGIDGAREERATFSVDELPEELSDVLKQCHQLHVRWASERRYDAVAPFSSRVSPGLHVFYTPVDGSSEENKLKSLCALLKRAFDYGLKCKSPETLEESFITPPILSTRFASTAAFQYHSLLPTLDNLVAYIENKICSSSDEQCLRYAASIRSADSVDINYDSISHSLTVLGYWSQSPKNGWTDEIRRHAAGTDQVEVGLLGTEAATEPEDIKMGGLLAVVGKDDQLSMLSSGLPSEFGVAYGYGTDDSWAEPTLFSFPSRHQPLPEDATYSISFTSPTGLHPTMTISMPPSSLNSPPAPPDATCALHTYLTLPSTIFGDKYQLSTTDPLFLDSHNLVALHAVAGETDLEAPDWFVSRWGSNWLLELATPSESDQVPEEWNVTIPLHLRYLRPSESGYRSASVPWPVVFWACTAEDGTKMGVNPFDRVNLGWEGLFGTRTMFYQLHPSSDRLVEELEVPVLQLDDKGFFQSKAIELGTMIVIGLGSLWVLWKLGAIAWSSGTRPQRKSTKQKKSE</sequence>
<name>PBN1_ASPOR</name>
<proteinExistence type="inferred from homology"/>
<dbReference type="EMBL" id="BA000053">
    <property type="protein sequence ID" value="BAE61955.1"/>
    <property type="molecule type" value="Genomic_DNA"/>
</dbReference>
<dbReference type="SMR" id="Q2U910"/>
<dbReference type="STRING" id="510516.Q2U910"/>
<dbReference type="GlyCosmos" id="Q2U910">
    <property type="glycosylation" value="1 site, No reported glycans"/>
</dbReference>
<dbReference type="EnsemblFungi" id="BAE61955">
    <property type="protein sequence ID" value="BAE61955"/>
    <property type="gene ID" value="AO090701000218"/>
</dbReference>
<dbReference type="HOGENOM" id="CLU_030047_0_0_1"/>
<dbReference type="OMA" id="HELHIRW"/>
<dbReference type="UniPathway" id="UPA00196"/>
<dbReference type="Proteomes" id="UP000006564">
    <property type="component" value="Chromosome 5"/>
</dbReference>
<dbReference type="GO" id="GO:0005789">
    <property type="term" value="C:endoplasmic reticulum membrane"/>
    <property type="evidence" value="ECO:0007669"/>
    <property type="project" value="UniProtKB-SubCell"/>
</dbReference>
<dbReference type="GO" id="GO:1990529">
    <property type="term" value="C:glycosylphosphatidylinositol-mannosyltransferase I complex"/>
    <property type="evidence" value="ECO:0007669"/>
    <property type="project" value="TreeGrafter"/>
</dbReference>
<dbReference type="GO" id="GO:0000030">
    <property type="term" value="F:mannosyltransferase activity"/>
    <property type="evidence" value="ECO:0007669"/>
    <property type="project" value="TreeGrafter"/>
</dbReference>
<dbReference type="GO" id="GO:0006506">
    <property type="term" value="P:GPI anchor biosynthetic process"/>
    <property type="evidence" value="ECO:0007669"/>
    <property type="project" value="UniProtKB-UniPathway"/>
</dbReference>
<dbReference type="InterPro" id="IPR042322">
    <property type="entry name" value="Pbn1"/>
</dbReference>
<dbReference type="InterPro" id="IPR013233">
    <property type="entry name" value="PIG-X/PBN1"/>
</dbReference>
<dbReference type="PANTHER" id="PTHR28533">
    <property type="entry name" value="PROTEIN PBN1"/>
    <property type="match status" value="1"/>
</dbReference>
<dbReference type="PANTHER" id="PTHR28533:SF1">
    <property type="entry name" value="PROTEIN PBN1"/>
    <property type="match status" value="1"/>
</dbReference>
<dbReference type="Pfam" id="PF08320">
    <property type="entry name" value="PIG-X"/>
    <property type="match status" value="1"/>
</dbReference>
<dbReference type="SMART" id="SM00780">
    <property type="entry name" value="PIG-X"/>
    <property type="match status" value="1"/>
</dbReference>
<accession>Q2U910</accession>
<evidence type="ECO:0000250" key="1"/>
<evidence type="ECO:0000255" key="2"/>
<evidence type="ECO:0000305" key="3"/>
<organism>
    <name type="scientific">Aspergillus oryzae (strain ATCC 42149 / RIB 40)</name>
    <name type="common">Yellow koji mold</name>
    <dbReference type="NCBI Taxonomy" id="510516"/>
    <lineage>
        <taxon>Eukaryota</taxon>
        <taxon>Fungi</taxon>
        <taxon>Dikarya</taxon>
        <taxon>Ascomycota</taxon>
        <taxon>Pezizomycotina</taxon>
        <taxon>Eurotiomycetes</taxon>
        <taxon>Eurotiomycetidae</taxon>
        <taxon>Eurotiales</taxon>
        <taxon>Aspergillaceae</taxon>
        <taxon>Aspergillus</taxon>
        <taxon>Aspergillus subgen. Circumdati</taxon>
    </lineage>
</organism>